<gene>
    <name evidence="6" type="primary">bet2</name>
</gene>
<comment type="function">
    <text evidence="2 5">Cytochrome P450 monooxygenase; part of the gene cluster that mediates the biosynthesis of betaenones, phytotoxic polyketides involved in leaf spot disease in sugar beets (PubMed:25530455). The first step of the pathway is the synthesis of dehydroprobetaenone I by the polyketide synthase bet1 and the enoyl reductase bet3 via condensation of one acetyl-CoA starter unit with 7 malonyl-CoA units and 5 methylations (PubMed:25530455). The C-terminal reductase (R) domain of bet1 catalyzes the reductive release of the polyketide chain (PubMed:25530455). Because bet1 lacks a designated enoylreductase (ER) domain, the required activity is provided the enoyl reductase bet3 (PubMed:25530455). The short-chain dehydrogenase/reductase bet4 then catalyzes reduction of dehydroprobetaenone I to probetaenone I (PubMed:25530455). The cytochrome P450 monooxygenase bet2 catalyzes successive epoxidation, oxidation (resulting from epoxide opening) and hydroxylation to install a tertiary alcohol in the decaline ring to yield betaenone C from dehydroprobetaenone I and betaenone B from probetaenone I (PubMed:25530455). The FAD-linked oxidoreductase (orf1) is probably responsible for the conversion of betaenone C to betaenone A via an intramolecular aldol reaction between C-1 and C-17 to form the bridged tricyclic system in betaenone A (By similarity).</text>
</comment>
<comment type="catalytic activity">
    <reaction evidence="5">
        <text>dehydroprobetaenone I + NADPH + O2 + H(+) = epoxybetaenone + NADP(+) + H2O</text>
        <dbReference type="Rhea" id="RHEA:61860"/>
        <dbReference type="ChEBI" id="CHEBI:15377"/>
        <dbReference type="ChEBI" id="CHEBI:15378"/>
        <dbReference type="ChEBI" id="CHEBI:15379"/>
        <dbReference type="ChEBI" id="CHEBI:57783"/>
        <dbReference type="ChEBI" id="CHEBI:58349"/>
        <dbReference type="ChEBI" id="CHEBI:145061"/>
        <dbReference type="ChEBI" id="CHEBI:145069"/>
    </reaction>
    <physiologicalReaction direction="left-to-right" evidence="5">
        <dbReference type="Rhea" id="RHEA:61861"/>
    </physiologicalReaction>
</comment>
<comment type="catalytic activity">
    <reaction evidence="5">
        <text>dehydroprobetaenone I + 3 NADPH + 3 O2 + 3 H(+) = betaenone C + 3 NADP(+) + 3 H2O</text>
        <dbReference type="Rhea" id="RHEA:61856"/>
        <dbReference type="ChEBI" id="CHEBI:15377"/>
        <dbReference type="ChEBI" id="CHEBI:15378"/>
        <dbReference type="ChEBI" id="CHEBI:15379"/>
        <dbReference type="ChEBI" id="CHEBI:57783"/>
        <dbReference type="ChEBI" id="CHEBI:58349"/>
        <dbReference type="ChEBI" id="CHEBI:145053"/>
        <dbReference type="ChEBI" id="CHEBI:145061"/>
    </reaction>
    <physiologicalReaction direction="left-to-right" evidence="5">
        <dbReference type="Rhea" id="RHEA:61857"/>
    </physiologicalReaction>
</comment>
<comment type="cofactor">
    <cofactor evidence="1">
        <name>heme</name>
        <dbReference type="ChEBI" id="CHEBI:30413"/>
    </cofactor>
</comment>
<comment type="pathway">
    <text evidence="5">Mycotoxin biosynthesis.</text>
</comment>
<comment type="subcellular location">
    <subcellularLocation>
        <location evidence="3">Membrane</location>
        <topology evidence="3">Single-pass membrane protein</topology>
    </subcellularLocation>
</comment>
<comment type="similarity">
    <text evidence="7">Belongs to the cytochrome P450 family.</text>
</comment>
<keyword id="KW-0325">Glycoprotein</keyword>
<keyword id="KW-0349">Heme</keyword>
<keyword id="KW-0408">Iron</keyword>
<keyword id="KW-0472">Membrane</keyword>
<keyword id="KW-0479">Metal-binding</keyword>
<keyword id="KW-0503">Monooxygenase</keyword>
<keyword id="KW-0560">Oxidoreductase</keyword>
<keyword id="KW-0812">Transmembrane</keyword>
<keyword id="KW-1133">Transmembrane helix</keyword>
<proteinExistence type="evidence at protein level"/>
<accession>A0A0C6DUU3</accession>
<protein>
    <recommendedName>
        <fullName evidence="6">Cytochrome P450 monooxygenase bet2</fullName>
        <ecNumber evidence="5">1.-.-.-</ecNumber>
    </recommendedName>
    <alternativeName>
        <fullName evidence="6">Betaenone biosynthesis cluster protein 2</fullName>
    </alternativeName>
</protein>
<organism>
    <name type="scientific">Neocamarosporium betae</name>
    <name type="common">Beet black rot fungus</name>
    <name type="synonym">Pleospora betae</name>
    <dbReference type="NCBI Taxonomy" id="1979465"/>
    <lineage>
        <taxon>Eukaryota</taxon>
        <taxon>Fungi</taxon>
        <taxon>Dikarya</taxon>
        <taxon>Ascomycota</taxon>
        <taxon>Pezizomycotina</taxon>
        <taxon>Dothideomycetes</taxon>
        <taxon>Pleosporomycetidae</taxon>
        <taxon>Pleosporales</taxon>
        <taxon>Pleosporineae</taxon>
        <taxon>Pleosporaceae</taxon>
        <taxon>Neocamarosporium</taxon>
    </lineage>
</organism>
<feature type="chain" id="PRO_0000448651" description="Cytochrome P450 monooxygenase bet2">
    <location>
        <begin position="1"/>
        <end position="521"/>
    </location>
</feature>
<feature type="transmembrane region" description="Helical" evidence="3">
    <location>
        <begin position="23"/>
        <end position="43"/>
    </location>
</feature>
<feature type="binding site" description="axial binding residue" evidence="1">
    <location>
        <position position="461"/>
    </location>
    <ligand>
        <name>heme</name>
        <dbReference type="ChEBI" id="CHEBI:30413"/>
    </ligand>
    <ligandPart>
        <name>Fe</name>
        <dbReference type="ChEBI" id="CHEBI:18248"/>
    </ligandPart>
</feature>
<feature type="glycosylation site" description="N-linked (GlcNAc...) asparagine" evidence="4">
    <location>
        <position position="188"/>
    </location>
</feature>
<name>BET2_NEOBT</name>
<evidence type="ECO:0000250" key="1">
    <source>
        <dbReference type="UniProtKB" id="P04798"/>
    </source>
</evidence>
<evidence type="ECO:0000250" key="2">
    <source>
        <dbReference type="UniProtKB" id="Q0UK53"/>
    </source>
</evidence>
<evidence type="ECO:0000255" key="3"/>
<evidence type="ECO:0000255" key="4">
    <source>
        <dbReference type="PROSITE-ProRule" id="PRU00498"/>
    </source>
</evidence>
<evidence type="ECO:0000269" key="5">
    <source>
    </source>
</evidence>
<evidence type="ECO:0000303" key="6">
    <source>
    </source>
</evidence>
<evidence type="ECO:0000305" key="7"/>
<reference key="1">
    <citation type="journal article" date="2015" name="Chem. Commun. (Camb.)">
        <title>Heterologous expression of highly reducing polyketide synthase involved in betaenone biosynthesis.</title>
        <authorList>
            <person name="Ugai T."/>
            <person name="Minami A."/>
            <person name="Fujii R."/>
            <person name="Tanaka M."/>
            <person name="Oguri H."/>
            <person name="Gomi K."/>
            <person name="Oikawa H."/>
        </authorList>
    </citation>
    <scope>NUCLEOTIDE SEQUENCE [GENOMIC DNA]</scope>
    <scope>FUNCTION</scope>
    <scope>CATALYTIC ACTIVITY</scope>
    <scope>PATHWAY</scope>
</reference>
<dbReference type="EC" id="1.-.-.-" evidence="5"/>
<dbReference type="EMBL" id="LC011911">
    <property type="protein sequence ID" value="BAQ25465.1"/>
    <property type="molecule type" value="Genomic_DNA"/>
</dbReference>
<dbReference type="SMR" id="A0A0C6DUU3"/>
<dbReference type="GlyCosmos" id="A0A0C6DUU3">
    <property type="glycosylation" value="1 site, No reported glycans"/>
</dbReference>
<dbReference type="GO" id="GO:0016020">
    <property type="term" value="C:membrane"/>
    <property type="evidence" value="ECO:0007669"/>
    <property type="project" value="UniProtKB-SubCell"/>
</dbReference>
<dbReference type="GO" id="GO:0020037">
    <property type="term" value="F:heme binding"/>
    <property type="evidence" value="ECO:0007669"/>
    <property type="project" value="InterPro"/>
</dbReference>
<dbReference type="GO" id="GO:0005506">
    <property type="term" value="F:iron ion binding"/>
    <property type="evidence" value="ECO:0007669"/>
    <property type="project" value="InterPro"/>
</dbReference>
<dbReference type="GO" id="GO:0004497">
    <property type="term" value="F:monooxygenase activity"/>
    <property type="evidence" value="ECO:0007669"/>
    <property type="project" value="UniProtKB-KW"/>
</dbReference>
<dbReference type="GO" id="GO:0016705">
    <property type="term" value="F:oxidoreductase activity, acting on paired donors, with incorporation or reduction of molecular oxygen"/>
    <property type="evidence" value="ECO:0007669"/>
    <property type="project" value="InterPro"/>
</dbReference>
<dbReference type="CDD" id="cd11058">
    <property type="entry name" value="CYP60B-like"/>
    <property type="match status" value="1"/>
</dbReference>
<dbReference type="FunFam" id="1.10.630.10:FF:000063">
    <property type="entry name" value="Cytochrome P450 monooxygenase"/>
    <property type="match status" value="1"/>
</dbReference>
<dbReference type="Gene3D" id="1.10.630.10">
    <property type="entry name" value="Cytochrome P450"/>
    <property type="match status" value="1"/>
</dbReference>
<dbReference type="InterPro" id="IPR001128">
    <property type="entry name" value="Cyt_P450"/>
</dbReference>
<dbReference type="InterPro" id="IPR017972">
    <property type="entry name" value="Cyt_P450_CS"/>
</dbReference>
<dbReference type="InterPro" id="IPR002401">
    <property type="entry name" value="Cyt_P450_E_grp-I"/>
</dbReference>
<dbReference type="InterPro" id="IPR036396">
    <property type="entry name" value="Cyt_P450_sf"/>
</dbReference>
<dbReference type="InterPro" id="IPR050121">
    <property type="entry name" value="Cytochrome_P450_monoxygenase"/>
</dbReference>
<dbReference type="PANTHER" id="PTHR24305">
    <property type="entry name" value="CYTOCHROME P450"/>
    <property type="match status" value="1"/>
</dbReference>
<dbReference type="PANTHER" id="PTHR24305:SF230">
    <property type="entry name" value="P450, PUTATIVE (EUROFUNG)-RELATED"/>
    <property type="match status" value="1"/>
</dbReference>
<dbReference type="Pfam" id="PF00067">
    <property type="entry name" value="p450"/>
    <property type="match status" value="1"/>
</dbReference>
<dbReference type="PRINTS" id="PR00463">
    <property type="entry name" value="EP450I"/>
</dbReference>
<dbReference type="PRINTS" id="PR00385">
    <property type="entry name" value="P450"/>
</dbReference>
<dbReference type="SUPFAM" id="SSF48264">
    <property type="entry name" value="Cytochrome P450"/>
    <property type="match status" value="1"/>
</dbReference>
<dbReference type="PROSITE" id="PS00086">
    <property type="entry name" value="CYTOCHROME_P450"/>
    <property type="match status" value="1"/>
</dbReference>
<sequence length="521" mass="60184">MMDLFKTDIMPDLQSSMMASIGSNWRFALFVAATLLTSYIVIVRPLKNVLFHPLRKYPGPKLFAGSSIPYGFWYMTGKWHTKIRQLHATYGPVVRIGPDELSYACPEAWEDIYGRYVPAKRKENPKPVWYCSPDAHDMVGASLGDHGRMRRVMTPGFTYSAMCKQEPLIKVHVDLFLEKLRGVCDDGNATVNMLEWFTYCTFDLIGDLSFGEPFGCLENSMLHPWLQLVFANIYVTHIILLCKRIPFFYLFLPIKTTLQLYRDFNRHVILLRQVVERRLSLTTPRNDFLDIMTSKKTSTLYLTNEEIFKNAILLTGGGAETTSSSLTGMAFILTTRPDVKKRIVEELHATFPNEEAINMRSVAQLTYTGAFIEEAMRYYPPGPNTMWRTTPAGGNTILGDYIPENTIIGIPHRVLYRSEAYWKHADEIHPERWLPDGQRPAEFDHDRREGFQPFSYGPRACIAMNLAYAEMRYILARFLWNFDIQETEQSKHWMDNQKAYLVWDKPGLFVRLKPVAKEEAQ</sequence>